<reference key="1">
    <citation type="submission" date="2003-07" db="EMBL/GenBank/DDBJ databases">
        <title>Structure, gene mapping, and expression of FRBZ1.</title>
        <authorList>
            <person name="Goudou D."/>
            <person name="Bitoun M."/>
            <person name="Rieger F."/>
            <person name="Perin J.-P."/>
            <person name="Alliel P.M."/>
        </authorList>
    </citation>
    <scope>NUCLEOTIDE SEQUENCE [MRNA] (ISOFORM 1)</scope>
    <source>
        <tissue>Brain</tissue>
        <tissue>Placenta</tissue>
    </source>
</reference>
<reference key="2">
    <citation type="journal article" date="2004" name="Nat. Genet.">
        <title>Complete sequencing and characterization of 21,243 full-length human cDNAs.</title>
        <authorList>
            <person name="Ota T."/>
            <person name="Suzuki Y."/>
            <person name="Nishikawa T."/>
            <person name="Otsuki T."/>
            <person name="Sugiyama T."/>
            <person name="Irie R."/>
            <person name="Wakamatsu A."/>
            <person name="Hayashi K."/>
            <person name="Sato H."/>
            <person name="Nagai K."/>
            <person name="Kimura K."/>
            <person name="Makita H."/>
            <person name="Sekine M."/>
            <person name="Obayashi M."/>
            <person name="Nishi T."/>
            <person name="Shibahara T."/>
            <person name="Tanaka T."/>
            <person name="Ishii S."/>
            <person name="Yamamoto J."/>
            <person name="Saito K."/>
            <person name="Kawai Y."/>
            <person name="Isono Y."/>
            <person name="Nakamura Y."/>
            <person name="Nagahari K."/>
            <person name="Murakami K."/>
            <person name="Yasuda T."/>
            <person name="Iwayanagi T."/>
            <person name="Wagatsuma M."/>
            <person name="Shiratori A."/>
            <person name="Sudo H."/>
            <person name="Hosoiri T."/>
            <person name="Kaku Y."/>
            <person name="Kodaira H."/>
            <person name="Kondo H."/>
            <person name="Sugawara M."/>
            <person name="Takahashi M."/>
            <person name="Kanda K."/>
            <person name="Yokoi T."/>
            <person name="Furuya T."/>
            <person name="Kikkawa E."/>
            <person name="Omura Y."/>
            <person name="Abe K."/>
            <person name="Kamihara K."/>
            <person name="Katsuta N."/>
            <person name="Sato K."/>
            <person name="Tanikawa M."/>
            <person name="Yamazaki M."/>
            <person name="Ninomiya K."/>
            <person name="Ishibashi T."/>
            <person name="Yamashita H."/>
            <person name="Murakawa K."/>
            <person name="Fujimori K."/>
            <person name="Tanai H."/>
            <person name="Kimata M."/>
            <person name="Watanabe M."/>
            <person name="Hiraoka S."/>
            <person name="Chiba Y."/>
            <person name="Ishida S."/>
            <person name="Ono Y."/>
            <person name="Takiguchi S."/>
            <person name="Watanabe S."/>
            <person name="Yosida M."/>
            <person name="Hotuta T."/>
            <person name="Kusano J."/>
            <person name="Kanehori K."/>
            <person name="Takahashi-Fujii A."/>
            <person name="Hara H."/>
            <person name="Tanase T.-O."/>
            <person name="Nomura Y."/>
            <person name="Togiya S."/>
            <person name="Komai F."/>
            <person name="Hara R."/>
            <person name="Takeuchi K."/>
            <person name="Arita M."/>
            <person name="Imose N."/>
            <person name="Musashino K."/>
            <person name="Yuuki H."/>
            <person name="Oshima A."/>
            <person name="Sasaki N."/>
            <person name="Aotsuka S."/>
            <person name="Yoshikawa Y."/>
            <person name="Matsunawa H."/>
            <person name="Ichihara T."/>
            <person name="Shiohata N."/>
            <person name="Sano S."/>
            <person name="Moriya S."/>
            <person name="Momiyama H."/>
            <person name="Satoh N."/>
            <person name="Takami S."/>
            <person name="Terashima Y."/>
            <person name="Suzuki O."/>
            <person name="Nakagawa S."/>
            <person name="Senoh A."/>
            <person name="Mizoguchi H."/>
            <person name="Goto Y."/>
            <person name="Shimizu F."/>
            <person name="Wakebe H."/>
            <person name="Hishigaki H."/>
            <person name="Watanabe T."/>
            <person name="Sugiyama A."/>
            <person name="Takemoto M."/>
            <person name="Kawakami B."/>
            <person name="Yamazaki M."/>
            <person name="Watanabe K."/>
            <person name="Kumagai A."/>
            <person name="Itakura S."/>
            <person name="Fukuzumi Y."/>
            <person name="Fujimori Y."/>
            <person name="Komiyama M."/>
            <person name="Tashiro H."/>
            <person name="Tanigami A."/>
            <person name="Fujiwara T."/>
            <person name="Ono T."/>
            <person name="Yamada K."/>
            <person name="Fujii Y."/>
            <person name="Ozaki K."/>
            <person name="Hirao M."/>
            <person name="Ohmori Y."/>
            <person name="Kawabata A."/>
            <person name="Hikiji T."/>
            <person name="Kobatake N."/>
            <person name="Inagaki H."/>
            <person name="Ikema Y."/>
            <person name="Okamoto S."/>
            <person name="Okitani R."/>
            <person name="Kawakami T."/>
            <person name="Noguchi S."/>
            <person name="Itoh T."/>
            <person name="Shigeta K."/>
            <person name="Senba T."/>
            <person name="Matsumura K."/>
            <person name="Nakajima Y."/>
            <person name="Mizuno T."/>
            <person name="Morinaga M."/>
            <person name="Sasaki M."/>
            <person name="Togashi T."/>
            <person name="Oyama M."/>
            <person name="Hata H."/>
            <person name="Watanabe M."/>
            <person name="Komatsu T."/>
            <person name="Mizushima-Sugano J."/>
            <person name="Satoh T."/>
            <person name="Shirai Y."/>
            <person name="Takahashi Y."/>
            <person name="Nakagawa K."/>
            <person name="Okumura K."/>
            <person name="Nagase T."/>
            <person name="Nomura N."/>
            <person name="Kikuchi H."/>
            <person name="Masuho Y."/>
            <person name="Yamashita R."/>
            <person name="Nakai K."/>
            <person name="Yada T."/>
            <person name="Nakamura Y."/>
            <person name="Ohara O."/>
            <person name="Isogai T."/>
            <person name="Sugano S."/>
        </authorList>
    </citation>
    <scope>NUCLEOTIDE SEQUENCE [LARGE SCALE MRNA] (ISOFORM 2)</scope>
    <source>
        <tissue>Trachea</tissue>
    </source>
</reference>
<reference key="3">
    <citation type="journal article" date="2006" name="Nature">
        <title>The DNA sequence and biological annotation of human chromosome 1.</title>
        <authorList>
            <person name="Gregory S.G."/>
            <person name="Barlow K.F."/>
            <person name="McLay K.E."/>
            <person name="Kaul R."/>
            <person name="Swarbreck D."/>
            <person name="Dunham A."/>
            <person name="Scott C.E."/>
            <person name="Howe K.L."/>
            <person name="Woodfine K."/>
            <person name="Spencer C.C.A."/>
            <person name="Jones M.C."/>
            <person name="Gillson C."/>
            <person name="Searle S."/>
            <person name="Zhou Y."/>
            <person name="Kokocinski F."/>
            <person name="McDonald L."/>
            <person name="Evans R."/>
            <person name="Phillips K."/>
            <person name="Atkinson A."/>
            <person name="Cooper R."/>
            <person name="Jones C."/>
            <person name="Hall R.E."/>
            <person name="Andrews T.D."/>
            <person name="Lloyd C."/>
            <person name="Ainscough R."/>
            <person name="Almeida J.P."/>
            <person name="Ambrose K.D."/>
            <person name="Anderson F."/>
            <person name="Andrew R.W."/>
            <person name="Ashwell R.I.S."/>
            <person name="Aubin K."/>
            <person name="Babbage A.K."/>
            <person name="Bagguley C.L."/>
            <person name="Bailey J."/>
            <person name="Beasley H."/>
            <person name="Bethel G."/>
            <person name="Bird C.P."/>
            <person name="Bray-Allen S."/>
            <person name="Brown J.Y."/>
            <person name="Brown A.J."/>
            <person name="Buckley D."/>
            <person name="Burton J."/>
            <person name="Bye J."/>
            <person name="Carder C."/>
            <person name="Chapman J.C."/>
            <person name="Clark S.Y."/>
            <person name="Clarke G."/>
            <person name="Clee C."/>
            <person name="Cobley V."/>
            <person name="Collier R.E."/>
            <person name="Corby N."/>
            <person name="Coville G.J."/>
            <person name="Davies J."/>
            <person name="Deadman R."/>
            <person name="Dunn M."/>
            <person name="Earthrowl M."/>
            <person name="Ellington A.G."/>
            <person name="Errington H."/>
            <person name="Frankish A."/>
            <person name="Frankland J."/>
            <person name="French L."/>
            <person name="Garner P."/>
            <person name="Garnett J."/>
            <person name="Gay L."/>
            <person name="Ghori M.R.J."/>
            <person name="Gibson R."/>
            <person name="Gilby L.M."/>
            <person name="Gillett W."/>
            <person name="Glithero R.J."/>
            <person name="Grafham D.V."/>
            <person name="Griffiths C."/>
            <person name="Griffiths-Jones S."/>
            <person name="Grocock R."/>
            <person name="Hammond S."/>
            <person name="Harrison E.S.I."/>
            <person name="Hart E."/>
            <person name="Haugen E."/>
            <person name="Heath P.D."/>
            <person name="Holmes S."/>
            <person name="Holt K."/>
            <person name="Howden P.J."/>
            <person name="Hunt A.R."/>
            <person name="Hunt S.E."/>
            <person name="Hunter G."/>
            <person name="Isherwood J."/>
            <person name="James R."/>
            <person name="Johnson C."/>
            <person name="Johnson D."/>
            <person name="Joy A."/>
            <person name="Kay M."/>
            <person name="Kershaw J.K."/>
            <person name="Kibukawa M."/>
            <person name="Kimberley A.M."/>
            <person name="King A."/>
            <person name="Knights A.J."/>
            <person name="Lad H."/>
            <person name="Laird G."/>
            <person name="Lawlor S."/>
            <person name="Leongamornlert D.A."/>
            <person name="Lloyd D.M."/>
            <person name="Loveland J."/>
            <person name="Lovell J."/>
            <person name="Lush M.J."/>
            <person name="Lyne R."/>
            <person name="Martin S."/>
            <person name="Mashreghi-Mohammadi M."/>
            <person name="Matthews L."/>
            <person name="Matthews N.S.W."/>
            <person name="McLaren S."/>
            <person name="Milne S."/>
            <person name="Mistry S."/>
            <person name="Moore M.J.F."/>
            <person name="Nickerson T."/>
            <person name="O'Dell C.N."/>
            <person name="Oliver K."/>
            <person name="Palmeiri A."/>
            <person name="Palmer S.A."/>
            <person name="Parker A."/>
            <person name="Patel D."/>
            <person name="Pearce A.V."/>
            <person name="Peck A.I."/>
            <person name="Pelan S."/>
            <person name="Phelps K."/>
            <person name="Phillimore B.J."/>
            <person name="Plumb R."/>
            <person name="Rajan J."/>
            <person name="Raymond C."/>
            <person name="Rouse G."/>
            <person name="Saenphimmachak C."/>
            <person name="Sehra H.K."/>
            <person name="Sheridan E."/>
            <person name="Shownkeen R."/>
            <person name="Sims S."/>
            <person name="Skuce C.D."/>
            <person name="Smith M."/>
            <person name="Steward C."/>
            <person name="Subramanian S."/>
            <person name="Sycamore N."/>
            <person name="Tracey A."/>
            <person name="Tromans A."/>
            <person name="Van Helmond Z."/>
            <person name="Wall M."/>
            <person name="Wallis J.M."/>
            <person name="White S."/>
            <person name="Whitehead S.L."/>
            <person name="Wilkinson J.E."/>
            <person name="Willey D.L."/>
            <person name="Williams H."/>
            <person name="Wilming L."/>
            <person name="Wray P.W."/>
            <person name="Wu Z."/>
            <person name="Coulson A."/>
            <person name="Vaudin M."/>
            <person name="Sulston J.E."/>
            <person name="Durbin R.M."/>
            <person name="Hubbard T."/>
            <person name="Wooster R."/>
            <person name="Dunham I."/>
            <person name="Carter N.P."/>
            <person name="McVean G."/>
            <person name="Ross M.T."/>
            <person name="Harrow J."/>
            <person name="Olson M.V."/>
            <person name="Beck S."/>
            <person name="Rogers J."/>
            <person name="Bentley D.R."/>
        </authorList>
    </citation>
    <scope>NUCLEOTIDE SEQUENCE [LARGE SCALE GENOMIC DNA]</scope>
</reference>
<reference key="4">
    <citation type="journal article" date="2004" name="Genome Res.">
        <title>The status, quality, and expansion of the NIH full-length cDNA project: the Mammalian Gene Collection (MGC).</title>
        <authorList>
            <consortium name="The MGC Project Team"/>
        </authorList>
    </citation>
    <scope>NUCLEOTIDE SEQUENCE [LARGE SCALE MRNA] (ISOFORM 1)</scope>
    <source>
        <tissue>Brain</tissue>
    </source>
</reference>
<reference key="5">
    <citation type="journal article" date="2007" name="BMC Genomics">
        <title>The full-ORF clone resource of the German cDNA consortium.</title>
        <authorList>
            <person name="Bechtel S."/>
            <person name="Rosenfelder H."/>
            <person name="Duda A."/>
            <person name="Schmidt C.P."/>
            <person name="Ernst U."/>
            <person name="Wellenreuther R."/>
            <person name="Mehrle A."/>
            <person name="Schuster C."/>
            <person name="Bahr A."/>
            <person name="Bloecker H."/>
            <person name="Heubner D."/>
            <person name="Hoerlein A."/>
            <person name="Michel G."/>
            <person name="Wedler H."/>
            <person name="Koehrer K."/>
            <person name="Ottenwaelder B."/>
            <person name="Poustka A."/>
            <person name="Wiemann S."/>
            <person name="Schupp I."/>
        </authorList>
    </citation>
    <scope>NUCLEOTIDE SEQUENCE [LARGE SCALE MRNA] OF 743-909</scope>
    <source>
        <tissue>Fetal kidney</tissue>
    </source>
</reference>
<reference key="6">
    <citation type="journal article" date="2008" name="Proc. Natl. Acad. Sci. U.S.A.">
        <title>A quantitative atlas of mitotic phosphorylation.</title>
        <authorList>
            <person name="Dephoure N."/>
            <person name="Zhou C."/>
            <person name="Villen J."/>
            <person name="Beausoleil S.A."/>
            <person name="Bakalarski C.E."/>
            <person name="Elledge S.J."/>
            <person name="Gygi S.P."/>
        </authorList>
    </citation>
    <scope>IDENTIFICATION BY MASS SPECTROMETRY [LARGE SCALE ANALYSIS]</scope>
    <source>
        <tissue>Cervix carcinoma</tissue>
    </source>
</reference>
<dbReference type="EMBL" id="AY163816">
    <property type="protein sequence ID" value="AAN71742.2"/>
    <property type="molecule type" value="mRNA"/>
</dbReference>
<dbReference type="EMBL" id="AY336933">
    <property type="protein sequence ID" value="AAP97434.1"/>
    <property type="molecule type" value="mRNA"/>
</dbReference>
<dbReference type="EMBL" id="AK128549">
    <property type="protein sequence ID" value="BAC87496.1"/>
    <property type="molecule type" value="mRNA"/>
</dbReference>
<dbReference type="EMBL" id="AL356315">
    <property type="status" value="NOT_ANNOTATED_CDS"/>
    <property type="molecule type" value="Genomic_DNA"/>
</dbReference>
<dbReference type="EMBL" id="AL627208">
    <property type="status" value="NOT_ANNOTATED_CDS"/>
    <property type="molecule type" value="Genomic_DNA"/>
</dbReference>
<dbReference type="EMBL" id="BC132818">
    <property type="protein sequence ID" value="AAI32819.1"/>
    <property type="molecule type" value="mRNA"/>
</dbReference>
<dbReference type="EMBL" id="BC136600">
    <property type="protein sequence ID" value="AAI36601.1"/>
    <property type="molecule type" value="mRNA"/>
</dbReference>
<dbReference type="EMBL" id="BX640886">
    <property type="protein sequence ID" value="CAE45940.1"/>
    <property type="molecule type" value="mRNA"/>
</dbReference>
<dbReference type="CCDS" id="CCDS30960.1">
    <molecule id="Q5SVQ8-1"/>
</dbReference>
<dbReference type="RefSeq" id="NP_919290.2">
    <molecule id="Q5SVQ8-1"/>
    <property type="nucleotide sequence ID" value="NM_194314.3"/>
</dbReference>
<dbReference type="RefSeq" id="XP_016856694.1">
    <molecule id="Q5SVQ8-2"/>
    <property type="nucleotide sequence ID" value="XM_017001205.3"/>
</dbReference>
<dbReference type="RefSeq" id="XP_047275627.1">
    <molecule id="Q5SVQ8-1"/>
    <property type="nucleotide sequence ID" value="XM_047419671.1"/>
</dbReference>
<dbReference type="RefSeq" id="XP_054192387.1">
    <molecule id="Q5SVQ8-1"/>
    <property type="nucleotide sequence ID" value="XM_054336412.1"/>
</dbReference>
<dbReference type="RefSeq" id="XP_054192389.1">
    <molecule id="Q5SVQ8-2"/>
    <property type="nucleotide sequence ID" value="XM_054336414.1"/>
</dbReference>
<dbReference type="SMR" id="Q5SVQ8"/>
<dbReference type="BioGRID" id="131819">
    <property type="interactions" value="19"/>
</dbReference>
<dbReference type="FunCoup" id="Q5SVQ8">
    <property type="interactions" value="1444"/>
</dbReference>
<dbReference type="IntAct" id="Q5SVQ8">
    <property type="interactions" value="6"/>
</dbReference>
<dbReference type="STRING" id="9606.ENSP00000356375"/>
<dbReference type="GlyGen" id="Q5SVQ8">
    <property type="glycosylation" value="1 site"/>
</dbReference>
<dbReference type="iPTMnet" id="Q5SVQ8"/>
<dbReference type="PhosphoSitePlus" id="Q5SVQ8"/>
<dbReference type="BioMuta" id="ZBTB41"/>
<dbReference type="DMDM" id="74756116"/>
<dbReference type="jPOST" id="Q5SVQ8"/>
<dbReference type="MassIVE" id="Q5SVQ8"/>
<dbReference type="PaxDb" id="9606-ENSP00000356375"/>
<dbReference type="PeptideAtlas" id="Q5SVQ8"/>
<dbReference type="ProteomicsDB" id="63949">
    <molecule id="Q5SVQ8-1"/>
</dbReference>
<dbReference type="ProteomicsDB" id="63950">
    <molecule id="Q5SVQ8-2"/>
</dbReference>
<dbReference type="ABCD" id="Q5SVQ8">
    <property type="antibodies" value="2 sequenced antibodies"/>
</dbReference>
<dbReference type="Antibodypedia" id="50783">
    <property type="antibodies" value="88 antibodies from 16 providers"/>
</dbReference>
<dbReference type="DNASU" id="360023"/>
<dbReference type="Ensembl" id="ENST00000367405.5">
    <molecule id="Q5SVQ8-1"/>
    <property type="protein sequence ID" value="ENSP00000356375.3"/>
    <property type="gene ID" value="ENSG00000177888.8"/>
</dbReference>
<dbReference type="Ensembl" id="ENST00000467322.1">
    <molecule id="Q5SVQ8-2"/>
    <property type="protein sequence ID" value="ENSP00000502173.1"/>
    <property type="gene ID" value="ENSG00000177888.8"/>
</dbReference>
<dbReference type="GeneID" id="360023"/>
<dbReference type="KEGG" id="hsa:360023"/>
<dbReference type="MANE-Select" id="ENST00000367405.5">
    <property type="protein sequence ID" value="ENSP00000356375.3"/>
    <property type="RefSeq nucleotide sequence ID" value="NM_194314.3"/>
    <property type="RefSeq protein sequence ID" value="NP_919290.2"/>
</dbReference>
<dbReference type="UCSC" id="uc001gtx.2">
    <molecule id="Q5SVQ8-1"/>
    <property type="organism name" value="human"/>
</dbReference>
<dbReference type="AGR" id="HGNC:24819"/>
<dbReference type="CTD" id="360023"/>
<dbReference type="DisGeNET" id="360023"/>
<dbReference type="GeneCards" id="ZBTB41"/>
<dbReference type="HGNC" id="HGNC:24819">
    <property type="gene designation" value="ZBTB41"/>
</dbReference>
<dbReference type="HPA" id="ENSG00000177888">
    <property type="expression patterns" value="Low tissue specificity"/>
</dbReference>
<dbReference type="neXtProt" id="NX_Q5SVQ8"/>
<dbReference type="OpenTargets" id="ENSG00000177888"/>
<dbReference type="PharmGKB" id="PA142670545"/>
<dbReference type="VEuPathDB" id="HostDB:ENSG00000177888"/>
<dbReference type="eggNOG" id="KOG1721">
    <property type="taxonomic scope" value="Eukaryota"/>
</dbReference>
<dbReference type="GeneTree" id="ENSGT00550000075080"/>
<dbReference type="HOGENOM" id="CLU_014920_0_0_1"/>
<dbReference type="InParanoid" id="Q5SVQ8"/>
<dbReference type="OMA" id="MVEKASF"/>
<dbReference type="OrthoDB" id="654211at2759"/>
<dbReference type="PAN-GO" id="Q5SVQ8">
    <property type="GO annotations" value="3 GO annotations based on evolutionary models"/>
</dbReference>
<dbReference type="PhylomeDB" id="Q5SVQ8"/>
<dbReference type="TreeFam" id="TF350933"/>
<dbReference type="PathwayCommons" id="Q5SVQ8"/>
<dbReference type="SignaLink" id="Q5SVQ8"/>
<dbReference type="BioGRID-ORCS" id="360023">
    <property type="hits" value="38 hits in 1219 CRISPR screens"/>
</dbReference>
<dbReference type="ChiTaRS" id="ZBTB41">
    <property type="organism name" value="human"/>
</dbReference>
<dbReference type="GenomeRNAi" id="360023"/>
<dbReference type="Pharos" id="Q5SVQ8">
    <property type="development level" value="Tdark"/>
</dbReference>
<dbReference type="PRO" id="PR:Q5SVQ8"/>
<dbReference type="Proteomes" id="UP000005640">
    <property type="component" value="Chromosome 1"/>
</dbReference>
<dbReference type="RNAct" id="Q5SVQ8">
    <property type="molecule type" value="protein"/>
</dbReference>
<dbReference type="Bgee" id="ENSG00000177888">
    <property type="expression patterns" value="Expressed in endothelial cell and 182 other cell types or tissues"/>
</dbReference>
<dbReference type="GO" id="GO:0005634">
    <property type="term" value="C:nucleus"/>
    <property type="evidence" value="ECO:0007669"/>
    <property type="project" value="UniProtKB-SubCell"/>
</dbReference>
<dbReference type="GO" id="GO:0000981">
    <property type="term" value="F:DNA-binding transcription factor activity, RNA polymerase II-specific"/>
    <property type="evidence" value="ECO:0000318"/>
    <property type="project" value="GO_Central"/>
</dbReference>
<dbReference type="GO" id="GO:0000978">
    <property type="term" value="F:RNA polymerase II cis-regulatory region sequence-specific DNA binding"/>
    <property type="evidence" value="ECO:0000318"/>
    <property type="project" value="GO_Central"/>
</dbReference>
<dbReference type="GO" id="GO:0008270">
    <property type="term" value="F:zinc ion binding"/>
    <property type="evidence" value="ECO:0007669"/>
    <property type="project" value="UniProtKB-KW"/>
</dbReference>
<dbReference type="GO" id="GO:0006357">
    <property type="term" value="P:regulation of transcription by RNA polymerase II"/>
    <property type="evidence" value="ECO:0000318"/>
    <property type="project" value="GO_Central"/>
</dbReference>
<dbReference type="CDD" id="cd18226">
    <property type="entry name" value="BTB_POZ_ZBTB41"/>
    <property type="match status" value="1"/>
</dbReference>
<dbReference type="FunFam" id="3.30.160.60:FF:000337">
    <property type="entry name" value="Zinc finger and BTB domain containing 41"/>
    <property type="match status" value="2"/>
</dbReference>
<dbReference type="FunFam" id="3.30.160.60:FF:001133">
    <property type="entry name" value="Zinc finger and BTB domain containing 41"/>
    <property type="match status" value="1"/>
</dbReference>
<dbReference type="FunFam" id="3.30.160.60:FF:001160">
    <property type="entry name" value="Zinc finger and BTB domain containing 41"/>
    <property type="match status" value="1"/>
</dbReference>
<dbReference type="FunFam" id="3.30.160.60:FF:001084">
    <property type="entry name" value="Zinc finger and BTB domain-containing 41"/>
    <property type="match status" value="1"/>
</dbReference>
<dbReference type="FunFam" id="3.30.160.60:FF:003483">
    <property type="entry name" value="Zinc finger and BTB domain-containing 41"/>
    <property type="match status" value="1"/>
</dbReference>
<dbReference type="FunFam" id="3.30.160.60:FF:001019">
    <property type="entry name" value="Zinc finger and BTB domain-containing protein 41"/>
    <property type="match status" value="1"/>
</dbReference>
<dbReference type="FunFam" id="3.30.160.60:FF:001282">
    <property type="entry name" value="Zinc finger and BTB domain-containing protein 41"/>
    <property type="match status" value="1"/>
</dbReference>
<dbReference type="FunFam" id="3.30.160.60:FF:000841">
    <property type="entry name" value="zinc finger and BTB domain-containing protein 41"/>
    <property type="match status" value="1"/>
</dbReference>
<dbReference type="FunFam" id="3.30.160.60:FF:000888">
    <property type="entry name" value="zinc finger and BTB domain-containing protein 41"/>
    <property type="match status" value="1"/>
</dbReference>
<dbReference type="FunFam" id="3.30.710.10:FF:000088">
    <property type="entry name" value="zinc finger and BTB domain-containing protein 41"/>
    <property type="match status" value="1"/>
</dbReference>
<dbReference type="FunFam" id="3.30.160.60:FF:000624">
    <property type="entry name" value="zinc finger protein 697"/>
    <property type="match status" value="1"/>
</dbReference>
<dbReference type="Gene3D" id="3.30.160.60">
    <property type="entry name" value="Classic Zinc Finger"/>
    <property type="match status" value="11"/>
</dbReference>
<dbReference type="Gene3D" id="3.30.710.10">
    <property type="entry name" value="Potassium Channel Kv1.1, Chain A"/>
    <property type="match status" value="1"/>
</dbReference>
<dbReference type="InterPro" id="IPR000210">
    <property type="entry name" value="BTB/POZ_dom"/>
</dbReference>
<dbReference type="InterPro" id="IPR011333">
    <property type="entry name" value="SKP1/BTB/POZ_sf"/>
</dbReference>
<dbReference type="InterPro" id="IPR036236">
    <property type="entry name" value="Znf_C2H2_sf"/>
</dbReference>
<dbReference type="InterPro" id="IPR013087">
    <property type="entry name" value="Znf_C2H2_type"/>
</dbReference>
<dbReference type="PANTHER" id="PTHR24379:SF121">
    <property type="entry name" value="C2H2-TYPE DOMAIN-CONTAINING PROTEIN"/>
    <property type="match status" value="1"/>
</dbReference>
<dbReference type="PANTHER" id="PTHR24379">
    <property type="entry name" value="KRAB AND ZINC FINGER DOMAIN-CONTAINING"/>
    <property type="match status" value="1"/>
</dbReference>
<dbReference type="Pfam" id="PF00651">
    <property type="entry name" value="BTB"/>
    <property type="match status" value="1"/>
</dbReference>
<dbReference type="Pfam" id="PF00096">
    <property type="entry name" value="zf-C2H2"/>
    <property type="match status" value="9"/>
</dbReference>
<dbReference type="SMART" id="SM00225">
    <property type="entry name" value="BTB"/>
    <property type="match status" value="1"/>
</dbReference>
<dbReference type="SMART" id="SM00355">
    <property type="entry name" value="ZnF_C2H2"/>
    <property type="match status" value="14"/>
</dbReference>
<dbReference type="SUPFAM" id="SSF57667">
    <property type="entry name" value="beta-beta-alpha zinc fingers"/>
    <property type="match status" value="7"/>
</dbReference>
<dbReference type="SUPFAM" id="SSF54695">
    <property type="entry name" value="POZ domain"/>
    <property type="match status" value="1"/>
</dbReference>
<dbReference type="PROSITE" id="PS50097">
    <property type="entry name" value="BTB"/>
    <property type="match status" value="1"/>
</dbReference>
<dbReference type="PROSITE" id="PS00028">
    <property type="entry name" value="ZINC_FINGER_C2H2_1"/>
    <property type="match status" value="13"/>
</dbReference>
<dbReference type="PROSITE" id="PS50157">
    <property type="entry name" value="ZINC_FINGER_C2H2_2"/>
    <property type="match status" value="14"/>
</dbReference>
<accession>Q5SVQ8</accession>
<accession>A2RUA8</accession>
<accession>Q6MZT8</accession>
<accession>Q6ZR25</accession>
<accession>Q7Z4T1</accession>
<accession>Q8IZ99</accession>
<keyword id="KW-0025">Alternative splicing</keyword>
<keyword id="KW-0238">DNA-binding</keyword>
<keyword id="KW-0479">Metal-binding</keyword>
<keyword id="KW-0539">Nucleus</keyword>
<keyword id="KW-1267">Proteomics identification</keyword>
<keyword id="KW-1185">Reference proteome</keyword>
<keyword id="KW-0677">Repeat</keyword>
<keyword id="KW-0804">Transcription</keyword>
<keyword id="KW-0805">Transcription regulation</keyword>
<keyword id="KW-0862">Zinc</keyword>
<keyword id="KW-0863">Zinc-finger</keyword>
<gene>
    <name type="primary">ZBTB41</name>
    <name type="synonym">FRBZ1</name>
</gene>
<protein>
    <recommendedName>
        <fullName>Zinc finger and BTB domain-containing protein 41</fullName>
    </recommendedName>
</protein>
<organism>
    <name type="scientific">Homo sapiens</name>
    <name type="common">Human</name>
    <dbReference type="NCBI Taxonomy" id="9606"/>
    <lineage>
        <taxon>Eukaryota</taxon>
        <taxon>Metazoa</taxon>
        <taxon>Chordata</taxon>
        <taxon>Craniata</taxon>
        <taxon>Vertebrata</taxon>
        <taxon>Euteleostomi</taxon>
        <taxon>Mammalia</taxon>
        <taxon>Eutheria</taxon>
        <taxon>Euarchontoglires</taxon>
        <taxon>Primates</taxon>
        <taxon>Haplorrhini</taxon>
        <taxon>Catarrhini</taxon>
        <taxon>Hominidae</taxon>
        <taxon>Homo</taxon>
    </lineage>
</organism>
<comment type="function">
    <text>May be involved in transcriptional regulation.</text>
</comment>
<comment type="subcellular location">
    <subcellularLocation>
        <location evidence="5">Nucleus</location>
    </subcellularLocation>
</comment>
<comment type="alternative products">
    <event type="alternative splicing"/>
    <isoform>
        <id>Q5SVQ8-1</id>
        <name>1</name>
        <sequence type="displayed"/>
    </isoform>
    <isoform>
        <id>Q5SVQ8-2</id>
        <name>2</name>
        <sequence type="described" ref="VSP_023092 VSP_023093"/>
    </isoform>
</comment>
<sequence length="909" mass="105192">MKKRRKVTSNLEKIHLGYHKDSSEGNVAVECDQVTYTHSAGRPTPEALHCYQELPPSPDQRKLLSSLQYNKNLLKYLNDDRQKQPSFCDLLIIVEGKEFSAHKVVVAVGSSYFHACLSKNPSTDVVTLDHVTHSVFQHLLEFLYTSEFFVYKYEIPLVLEAAKFLDIIDAVKLLNNENVAPFHSELTEKSSPEETLNELTGRLSNNHQCKFCSRHFCYKKSLENHLAKTHRSLLLGKKHGLKMLERSFSARRSKRNRKCPVKFDDTSDDEQESGDGSDNLNQENFDKEKSDRNDSEDPGSEYNAEEDELEEEMSDEYSDIEEQSEKDHNDAEEEPEAGDSVGNVHEGLTPVVIQNSNKKILQCPKCDKTFDRIGKYESHTRVHTGEKPFECDICHQRYSTKSNLTVHRKKHSNETEFHKKEHKCPYCNKLHASKKTLAKHVKRFHPENAQEFISIKKTKSESWKCDICKKSFTRRPHLEEHMILHSQDKPFKCTYCEEHFKSRFARLKHQEKFHLGPFPCDICGRQFNDTGNLKRHIECTHGGKRKWTCFICGKSVRERTTLKEHLRIHSGEKPHLCSICGQSFRHGSSYRLHLRVHHDDKRYECDECGKTFIRHDHLTKHKKIHSGEKAHQCEECGKCFGRRDHLTVHYKSVHLGEKVWQKYKATFHQCDVCKKIFKGKSSLEMHFRTHSGEKPYKCQICNQSFRIKKTLTKHLVIHSDARPFNCQHCNATFKRKDKLKYHIDHVHEIKSPDDPLSTSEEKLVSLPVEYSSDDKIFQTETKQYMDQPKVYQSEAKTMLQNVSAEVCVPVTLVPVQMPDTPSDLVRHTTTLPPSSHEILSPQPQSTDYPRAADLAFLEKYTLTPQPANIVHPVRPEQMLDPREQSYLGTLLGLDSTTGVQNISTNEHHS</sequence>
<proteinExistence type="evidence at protein level"/>
<evidence type="ECO:0000255" key="1">
    <source>
        <dbReference type="PROSITE-ProRule" id="PRU00037"/>
    </source>
</evidence>
<evidence type="ECO:0000255" key="2">
    <source>
        <dbReference type="PROSITE-ProRule" id="PRU00042"/>
    </source>
</evidence>
<evidence type="ECO:0000256" key="3">
    <source>
        <dbReference type="SAM" id="MobiDB-lite"/>
    </source>
</evidence>
<evidence type="ECO:0000303" key="4">
    <source>
    </source>
</evidence>
<evidence type="ECO:0000305" key="5"/>
<feature type="chain" id="PRO_0000277814" description="Zinc finger and BTB domain-containing protein 41">
    <location>
        <begin position="1"/>
        <end position="909"/>
    </location>
</feature>
<feature type="domain" description="BTB" evidence="1">
    <location>
        <begin position="88"/>
        <end position="152"/>
    </location>
</feature>
<feature type="zinc finger region" description="C2H2-type 1" evidence="2">
    <location>
        <begin position="207"/>
        <end position="230"/>
    </location>
</feature>
<feature type="zinc finger region" description="C2H2-type 2" evidence="2">
    <location>
        <begin position="361"/>
        <end position="383"/>
    </location>
</feature>
<feature type="zinc finger region" description="C2H2-type 3" evidence="2">
    <location>
        <begin position="389"/>
        <end position="411"/>
    </location>
</feature>
<feature type="zinc finger region" description="C2H2-type 4" evidence="2">
    <location>
        <begin position="422"/>
        <end position="445"/>
    </location>
</feature>
<feature type="zinc finger region" description="C2H2-type 5" evidence="2">
    <location>
        <begin position="463"/>
        <end position="485"/>
    </location>
</feature>
<feature type="zinc finger region" description="C2H2-type 6" evidence="2">
    <location>
        <begin position="491"/>
        <end position="514"/>
    </location>
</feature>
<feature type="zinc finger region" description="C2H2-type 7" evidence="2">
    <location>
        <begin position="518"/>
        <end position="541"/>
    </location>
</feature>
<feature type="zinc finger region" description="C2H2-type 8" evidence="2">
    <location>
        <begin position="547"/>
        <end position="569"/>
    </location>
</feature>
<feature type="zinc finger region" description="C2H2-type 9" evidence="2">
    <location>
        <begin position="575"/>
        <end position="597"/>
    </location>
</feature>
<feature type="zinc finger region" description="C2H2-type 10" evidence="2">
    <location>
        <begin position="603"/>
        <end position="625"/>
    </location>
</feature>
<feature type="zinc finger region" description="C2H2-type 11" evidence="2">
    <location>
        <begin position="631"/>
        <end position="654"/>
    </location>
</feature>
<feature type="zinc finger region" description="C2H2-type 12" evidence="2">
    <location>
        <begin position="668"/>
        <end position="690"/>
    </location>
</feature>
<feature type="zinc finger region" description="C2H2-type 13" evidence="2">
    <location>
        <begin position="696"/>
        <end position="718"/>
    </location>
</feature>
<feature type="zinc finger region" description="C2H2-type 14" evidence="2">
    <location>
        <begin position="724"/>
        <end position="747"/>
    </location>
</feature>
<feature type="region of interest" description="Disordered" evidence="3">
    <location>
        <begin position="252"/>
        <end position="344"/>
    </location>
</feature>
<feature type="compositionally biased region" description="Acidic residues" evidence="3">
    <location>
        <begin position="266"/>
        <end position="275"/>
    </location>
</feature>
<feature type="compositionally biased region" description="Basic and acidic residues" evidence="3">
    <location>
        <begin position="284"/>
        <end position="295"/>
    </location>
</feature>
<feature type="compositionally biased region" description="Acidic residues" evidence="3">
    <location>
        <begin position="296"/>
        <end position="322"/>
    </location>
</feature>
<feature type="splice variant" id="VSP_023092" description="In isoform 2." evidence="4">
    <original>G</original>
    <variation>D</variation>
    <location>
        <position position="627"/>
    </location>
</feature>
<feature type="splice variant" id="VSP_023093" description="In isoform 2." evidence="4">
    <location>
        <begin position="628"/>
        <end position="909"/>
    </location>
</feature>
<feature type="sequence variant" id="VAR_030601" description="In dbSNP:rs10494751.">
    <original>D</original>
    <variation>Y</variation>
    <location>
        <position position="327"/>
    </location>
</feature>
<feature type="sequence conflict" description="In Ref. 2; BAC87496." evidence="5" ref="2">
    <original>F</original>
    <variation>L</variation>
    <location>
        <position position="182"/>
    </location>
</feature>
<name>ZBT41_HUMAN</name>